<accession>A8ERI4</accession>
<dbReference type="EC" id="2.5.1.61" evidence="1"/>
<dbReference type="EMBL" id="CP000361">
    <property type="protein sequence ID" value="ABV66558.1"/>
    <property type="molecule type" value="Genomic_DNA"/>
</dbReference>
<dbReference type="RefSeq" id="WP_012012137.1">
    <property type="nucleotide sequence ID" value="NC_009850.1"/>
</dbReference>
<dbReference type="SMR" id="A8ERI4"/>
<dbReference type="STRING" id="367737.Abu_0283"/>
<dbReference type="GeneID" id="24304797"/>
<dbReference type="KEGG" id="abu:Abu_0283"/>
<dbReference type="eggNOG" id="COG0181">
    <property type="taxonomic scope" value="Bacteria"/>
</dbReference>
<dbReference type="HOGENOM" id="CLU_019704_0_2_7"/>
<dbReference type="UniPathway" id="UPA00251">
    <property type="reaction ID" value="UER00319"/>
</dbReference>
<dbReference type="Proteomes" id="UP000001136">
    <property type="component" value="Chromosome"/>
</dbReference>
<dbReference type="GO" id="GO:0005737">
    <property type="term" value="C:cytoplasm"/>
    <property type="evidence" value="ECO:0007669"/>
    <property type="project" value="TreeGrafter"/>
</dbReference>
<dbReference type="GO" id="GO:0004418">
    <property type="term" value="F:hydroxymethylbilane synthase activity"/>
    <property type="evidence" value="ECO:0007669"/>
    <property type="project" value="UniProtKB-UniRule"/>
</dbReference>
<dbReference type="GO" id="GO:0006782">
    <property type="term" value="P:protoporphyrinogen IX biosynthetic process"/>
    <property type="evidence" value="ECO:0007669"/>
    <property type="project" value="UniProtKB-UniRule"/>
</dbReference>
<dbReference type="CDD" id="cd13646">
    <property type="entry name" value="PBP2_EcHMBS_like"/>
    <property type="match status" value="1"/>
</dbReference>
<dbReference type="FunFam" id="3.40.190.10:FF:000004">
    <property type="entry name" value="Porphobilinogen deaminase"/>
    <property type="match status" value="1"/>
</dbReference>
<dbReference type="FunFam" id="3.40.190.10:FF:000005">
    <property type="entry name" value="Porphobilinogen deaminase"/>
    <property type="match status" value="1"/>
</dbReference>
<dbReference type="Gene3D" id="3.40.190.10">
    <property type="entry name" value="Periplasmic binding protein-like II"/>
    <property type="match status" value="2"/>
</dbReference>
<dbReference type="Gene3D" id="3.30.160.40">
    <property type="entry name" value="Porphobilinogen deaminase, C-terminal domain"/>
    <property type="match status" value="1"/>
</dbReference>
<dbReference type="HAMAP" id="MF_00260">
    <property type="entry name" value="Porphobil_deam"/>
    <property type="match status" value="1"/>
</dbReference>
<dbReference type="InterPro" id="IPR000860">
    <property type="entry name" value="HemC"/>
</dbReference>
<dbReference type="InterPro" id="IPR022419">
    <property type="entry name" value="Porphobilin_deaminase_cofac_BS"/>
</dbReference>
<dbReference type="InterPro" id="IPR022417">
    <property type="entry name" value="Porphobilin_deaminase_N"/>
</dbReference>
<dbReference type="InterPro" id="IPR022418">
    <property type="entry name" value="Porphobilinogen_deaminase_C"/>
</dbReference>
<dbReference type="InterPro" id="IPR036803">
    <property type="entry name" value="Porphobilinogen_deaminase_C_sf"/>
</dbReference>
<dbReference type="NCBIfam" id="TIGR00212">
    <property type="entry name" value="hemC"/>
    <property type="match status" value="1"/>
</dbReference>
<dbReference type="PANTHER" id="PTHR11557">
    <property type="entry name" value="PORPHOBILINOGEN DEAMINASE"/>
    <property type="match status" value="1"/>
</dbReference>
<dbReference type="PANTHER" id="PTHR11557:SF0">
    <property type="entry name" value="PORPHOBILINOGEN DEAMINASE"/>
    <property type="match status" value="1"/>
</dbReference>
<dbReference type="Pfam" id="PF01379">
    <property type="entry name" value="Porphobil_deam"/>
    <property type="match status" value="1"/>
</dbReference>
<dbReference type="Pfam" id="PF03900">
    <property type="entry name" value="Porphobil_deamC"/>
    <property type="match status" value="1"/>
</dbReference>
<dbReference type="PIRSF" id="PIRSF001438">
    <property type="entry name" value="4pyrrol_synth_OHMeBilane_synth"/>
    <property type="match status" value="1"/>
</dbReference>
<dbReference type="PRINTS" id="PR00151">
    <property type="entry name" value="PORPHBDMNASE"/>
</dbReference>
<dbReference type="SUPFAM" id="SSF53850">
    <property type="entry name" value="Periplasmic binding protein-like II"/>
    <property type="match status" value="1"/>
</dbReference>
<dbReference type="SUPFAM" id="SSF54782">
    <property type="entry name" value="Porphobilinogen deaminase (hydroxymethylbilane synthase), C-terminal domain"/>
    <property type="match status" value="1"/>
</dbReference>
<dbReference type="PROSITE" id="PS00533">
    <property type="entry name" value="PORPHOBILINOGEN_DEAM"/>
    <property type="match status" value="1"/>
</dbReference>
<protein>
    <recommendedName>
        <fullName evidence="1">Porphobilinogen deaminase</fullName>
        <shortName evidence="1">PBG</shortName>
        <ecNumber evidence="1">2.5.1.61</ecNumber>
    </recommendedName>
    <alternativeName>
        <fullName evidence="1">Hydroxymethylbilane synthase</fullName>
        <shortName evidence="1">HMBS</shortName>
    </alternativeName>
    <alternativeName>
        <fullName evidence="1">Pre-uroporphyrinogen synthase</fullName>
    </alternativeName>
</protein>
<comment type="function">
    <text evidence="1">Tetrapolymerization of the monopyrrole PBG into the hydroxymethylbilane pre-uroporphyrinogen in several discrete steps.</text>
</comment>
<comment type="catalytic activity">
    <reaction evidence="1">
        <text>4 porphobilinogen + H2O = hydroxymethylbilane + 4 NH4(+)</text>
        <dbReference type="Rhea" id="RHEA:13185"/>
        <dbReference type="ChEBI" id="CHEBI:15377"/>
        <dbReference type="ChEBI" id="CHEBI:28938"/>
        <dbReference type="ChEBI" id="CHEBI:57845"/>
        <dbReference type="ChEBI" id="CHEBI:58126"/>
        <dbReference type="EC" id="2.5.1.61"/>
    </reaction>
</comment>
<comment type="cofactor">
    <cofactor evidence="1">
        <name>dipyrromethane</name>
        <dbReference type="ChEBI" id="CHEBI:60342"/>
    </cofactor>
    <text evidence="1">Binds 1 dipyrromethane group covalently.</text>
</comment>
<comment type="pathway">
    <text evidence="1">Porphyrin-containing compound metabolism; protoporphyrin-IX biosynthesis; coproporphyrinogen-III from 5-aminolevulinate: step 2/4.</text>
</comment>
<comment type="subunit">
    <text evidence="1">Monomer.</text>
</comment>
<comment type="miscellaneous">
    <text evidence="1">The porphobilinogen subunits are added to the dipyrromethane group.</text>
</comment>
<comment type="similarity">
    <text evidence="1">Belongs to the HMBS family.</text>
</comment>
<organism>
    <name type="scientific">Aliarcobacter butzleri (strain RM4018)</name>
    <name type="common">Arcobacter butzleri</name>
    <dbReference type="NCBI Taxonomy" id="367737"/>
    <lineage>
        <taxon>Bacteria</taxon>
        <taxon>Pseudomonadati</taxon>
        <taxon>Campylobacterota</taxon>
        <taxon>Epsilonproteobacteria</taxon>
        <taxon>Campylobacterales</taxon>
        <taxon>Arcobacteraceae</taxon>
        <taxon>Aliarcobacter</taxon>
    </lineage>
</organism>
<keyword id="KW-0627">Porphyrin biosynthesis</keyword>
<keyword id="KW-1185">Reference proteome</keyword>
<keyword id="KW-0808">Transferase</keyword>
<name>HEM3_ALIB4</name>
<sequence>MEKLVIATRRSQLALWQSEYVKSRLLEHYPNMQIELQEFVTKGDKILDVPLAKIGGKGLFTKELEVAMLEGSAHLAVHSLKDVPTQFEDGLMLAAVTKRFDPRDAFLSNKYTSLEELPKGAIVGTTSLRRRMALKILRPDIELKDLRGNINTRIAKLNAGEYDAIILAATGIQKLGIENEVKYFSPISTDIMIPSMGQATLGIETTNDPKVLEILKVLNDNNAHIESTVERSFVDTLQGGCQVPIGVKATILDENSIRVQAIVGMPDGSEYISEDITADIEDYETIGQNLAQIFIDQGAKELLEKAEKVAFK</sequence>
<evidence type="ECO:0000255" key="1">
    <source>
        <dbReference type="HAMAP-Rule" id="MF_00260"/>
    </source>
</evidence>
<reference key="1">
    <citation type="journal article" date="2007" name="PLoS ONE">
        <title>The complete genome sequence and analysis of the Epsilonproteobacterium Arcobacter butzleri.</title>
        <authorList>
            <person name="Miller W.G."/>
            <person name="Parker C.T."/>
            <person name="Rubenfield M."/>
            <person name="Mendz G.L."/>
            <person name="Woesten M.M.S.M."/>
            <person name="Ussery D.W."/>
            <person name="Stolz J.F."/>
            <person name="Binnewies T.T."/>
            <person name="Hallin P.F."/>
            <person name="Wang G."/>
            <person name="Malek J.A."/>
            <person name="Rogosin A."/>
            <person name="Stanker L.H."/>
            <person name="Mandrell R.E."/>
        </authorList>
    </citation>
    <scope>NUCLEOTIDE SEQUENCE [LARGE SCALE GENOMIC DNA]</scope>
    <source>
        <strain>RM4018</strain>
    </source>
</reference>
<proteinExistence type="inferred from homology"/>
<gene>
    <name evidence="1" type="primary">hemC</name>
    <name type="ordered locus">Abu_0283</name>
</gene>
<feature type="chain" id="PRO_1000059093" description="Porphobilinogen deaminase">
    <location>
        <begin position="1"/>
        <end position="312"/>
    </location>
</feature>
<feature type="modified residue" description="S-(dipyrrolylmethanemethyl)cysteine" evidence="1">
    <location>
        <position position="241"/>
    </location>
</feature>